<dbReference type="EMBL" id="AF159852">
    <property type="protein sequence ID" value="AAD54965.1"/>
    <property type="molecule type" value="mRNA"/>
</dbReference>
<dbReference type="EMBL" id="AF132213">
    <property type="protein sequence ID" value="AAF61321.1"/>
    <property type="molecule type" value="mRNA"/>
</dbReference>
<dbReference type="EMBL" id="AE014296">
    <property type="protein sequence ID" value="AAF50333.3"/>
    <property type="molecule type" value="Genomic_DNA"/>
</dbReference>
<dbReference type="EMBL" id="AE014296">
    <property type="protein sequence ID" value="AAF50334.3"/>
    <property type="molecule type" value="Genomic_DNA"/>
</dbReference>
<dbReference type="EMBL" id="AE014296">
    <property type="protein sequence ID" value="ACL83279.1"/>
    <property type="molecule type" value="Genomic_DNA"/>
</dbReference>
<dbReference type="EMBL" id="AE014296">
    <property type="protein sequence ID" value="ACL83280.1"/>
    <property type="molecule type" value="Genomic_DNA"/>
</dbReference>
<dbReference type="EMBL" id="AE014296">
    <property type="protein sequence ID" value="AAN11981.1"/>
    <property type="molecule type" value="Genomic_DNA"/>
</dbReference>
<dbReference type="EMBL" id="AY058607">
    <property type="protein sequence ID" value="AAL13836.1"/>
    <property type="molecule type" value="mRNA"/>
</dbReference>
<dbReference type="EMBL" id="U03277">
    <property type="protein sequence ID" value="AAA03462.1"/>
    <property type="status" value="ALT_SEQ"/>
    <property type="molecule type" value="Unassigned_DNA"/>
</dbReference>
<dbReference type="RefSeq" id="NP_001137924.1">
    <molecule id="Q23972-2"/>
    <property type="nucleotide sequence ID" value="NM_001144452.2"/>
</dbReference>
<dbReference type="RefSeq" id="NP_001137925.1">
    <molecule id="Q23972-1"/>
    <property type="nucleotide sequence ID" value="NM_001144453.2"/>
</dbReference>
<dbReference type="RefSeq" id="NP_523987.1">
    <molecule id="Q23972-1"/>
    <property type="nucleotide sequence ID" value="NM_079263.3"/>
</dbReference>
<dbReference type="RefSeq" id="NP_729441.1">
    <molecule id="Q23972-1"/>
    <property type="nucleotide sequence ID" value="NM_168309.3"/>
</dbReference>
<dbReference type="RefSeq" id="NP_729442.1">
    <molecule id="Q23972-1"/>
    <property type="nucleotide sequence ID" value="NM_168310.3"/>
</dbReference>
<dbReference type="PDB" id="1OXJ">
    <property type="method" value="X-ray"/>
    <property type="resolution" value="1.80 A"/>
    <property type="chains" value="A=593-764"/>
</dbReference>
<dbReference type="PDB" id="8OIJ">
    <property type="method" value="X-ray"/>
    <property type="resolution" value="2.00 A"/>
    <property type="chains" value="A/B=73-278"/>
</dbReference>
<dbReference type="PDBsum" id="1OXJ"/>
<dbReference type="PDBsum" id="8OIJ"/>
<dbReference type="SMR" id="Q23972"/>
<dbReference type="BioGRID" id="64438">
    <property type="interactions" value="50"/>
</dbReference>
<dbReference type="FunCoup" id="Q23972">
    <property type="interactions" value="1081"/>
</dbReference>
<dbReference type="IntAct" id="Q23972">
    <property type="interactions" value="9"/>
</dbReference>
<dbReference type="MINT" id="Q23972"/>
<dbReference type="STRING" id="7227.FBpp0288542"/>
<dbReference type="iPTMnet" id="Q23972"/>
<dbReference type="PaxDb" id="7227-FBpp0288542"/>
<dbReference type="ABCD" id="Q23972">
    <property type="antibodies" value="10 sequenced antibodies"/>
</dbReference>
<dbReference type="DNASU" id="39034"/>
<dbReference type="EnsemblMetazoa" id="FBtr0076549">
    <molecule id="Q23972-1"/>
    <property type="protein sequence ID" value="FBpp0076276"/>
    <property type="gene ID" value="FBgn0016070"/>
</dbReference>
<dbReference type="EnsemblMetazoa" id="FBtr0076550">
    <molecule id="Q23972-1"/>
    <property type="protein sequence ID" value="FBpp0076277"/>
    <property type="gene ID" value="FBgn0016070"/>
</dbReference>
<dbReference type="EnsemblMetazoa" id="FBtr0076551">
    <molecule id="Q23972-1"/>
    <property type="protein sequence ID" value="FBpp0076278"/>
    <property type="gene ID" value="FBgn0016070"/>
</dbReference>
<dbReference type="EnsemblMetazoa" id="FBtr0290103">
    <molecule id="Q23972-2"/>
    <property type="protein sequence ID" value="FBpp0288542"/>
    <property type="gene ID" value="FBgn0016070"/>
</dbReference>
<dbReference type="EnsemblMetazoa" id="FBtr0290104">
    <molecule id="Q23972-1"/>
    <property type="protein sequence ID" value="FBpp0288543"/>
    <property type="gene ID" value="FBgn0016070"/>
</dbReference>
<dbReference type="GeneID" id="39034"/>
<dbReference type="KEGG" id="dme:Dmel_CG5263"/>
<dbReference type="UCSC" id="CG5263-RA">
    <molecule id="Q23972-1"/>
    <property type="organism name" value="d. melanogaster"/>
</dbReference>
<dbReference type="AGR" id="FB:FBgn0016070"/>
<dbReference type="CTD" id="39034"/>
<dbReference type="FlyBase" id="FBgn0016070">
    <property type="gene designation" value="smg"/>
</dbReference>
<dbReference type="VEuPathDB" id="VectorBase:FBgn0016070"/>
<dbReference type="eggNOG" id="KOG3791">
    <property type="taxonomic scope" value="Eukaryota"/>
</dbReference>
<dbReference type="GeneTree" id="ENSGT00940000169155"/>
<dbReference type="HOGENOM" id="CLU_003304_0_0_1"/>
<dbReference type="InParanoid" id="Q23972"/>
<dbReference type="OMA" id="HHSQHAQ"/>
<dbReference type="OrthoDB" id="2155283at2759"/>
<dbReference type="PhylomeDB" id="Q23972"/>
<dbReference type="SignaLink" id="Q23972"/>
<dbReference type="BioGRID-ORCS" id="39034">
    <property type="hits" value="0 hits in 3 CRISPR screens"/>
</dbReference>
<dbReference type="ChiTaRS" id="smg">
    <property type="organism name" value="fly"/>
</dbReference>
<dbReference type="EvolutionaryTrace" id="Q23972"/>
<dbReference type="GenomeRNAi" id="39034"/>
<dbReference type="PRO" id="PR:Q23972"/>
<dbReference type="Proteomes" id="UP000000803">
    <property type="component" value="Chromosome 3L"/>
</dbReference>
<dbReference type="Bgee" id="FBgn0016070">
    <property type="expression patterns" value="Expressed in cleaving embryo and 227 other cell types or tissues"/>
</dbReference>
<dbReference type="GO" id="GO:0005737">
    <property type="term" value="C:cytoplasm"/>
    <property type="evidence" value="ECO:0000314"/>
    <property type="project" value="UniProtKB"/>
</dbReference>
<dbReference type="GO" id="GO:0043186">
    <property type="term" value="C:P granule"/>
    <property type="evidence" value="ECO:0000314"/>
    <property type="project" value="FlyBase"/>
</dbReference>
<dbReference type="GO" id="GO:0000932">
    <property type="term" value="C:P-body"/>
    <property type="evidence" value="ECO:0000314"/>
    <property type="project" value="FlyBase"/>
</dbReference>
<dbReference type="GO" id="GO:0003730">
    <property type="term" value="F:mRNA 3'-UTR binding"/>
    <property type="evidence" value="ECO:0000304"/>
    <property type="project" value="FlyBase"/>
</dbReference>
<dbReference type="GO" id="GO:0003729">
    <property type="term" value="F:mRNA binding"/>
    <property type="evidence" value="ECO:0000318"/>
    <property type="project" value="GO_Central"/>
</dbReference>
<dbReference type="GO" id="GO:0000900">
    <property type="term" value="F:mRNA regulatory element binding translation repressor activity"/>
    <property type="evidence" value="ECO:0000304"/>
    <property type="project" value="FlyBase"/>
</dbReference>
<dbReference type="GO" id="GO:0017022">
    <property type="term" value="F:myosin binding"/>
    <property type="evidence" value="ECO:0000353"/>
    <property type="project" value="FlyBase"/>
</dbReference>
<dbReference type="GO" id="GO:0030371">
    <property type="term" value="F:translation repressor activity"/>
    <property type="evidence" value="ECO:0000314"/>
    <property type="project" value="UniProtKB"/>
</dbReference>
<dbReference type="GO" id="GO:0051236">
    <property type="term" value="P:establishment of RNA localization"/>
    <property type="evidence" value="ECO:0000315"/>
    <property type="project" value="FlyBase"/>
</dbReference>
<dbReference type="GO" id="GO:1905937">
    <property type="term" value="P:negative regulation of germ cell proliferation"/>
    <property type="evidence" value="ECO:0000316"/>
    <property type="project" value="FlyBase"/>
</dbReference>
<dbReference type="GO" id="GO:0007319">
    <property type="term" value="P:negative regulation of oskar mRNA translation"/>
    <property type="evidence" value="ECO:0000315"/>
    <property type="project" value="FlyBase"/>
</dbReference>
<dbReference type="GO" id="GO:0017148">
    <property type="term" value="P:negative regulation of translation"/>
    <property type="evidence" value="ECO:0000314"/>
    <property type="project" value="FlyBase"/>
</dbReference>
<dbReference type="GO" id="GO:0000289">
    <property type="term" value="P:nuclear-transcribed mRNA poly(A) tail shortening"/>
    <property type="evidence" value="ECO:0000315"/>
    <property type="project" value="FlyBase"/>
</dbReference>
<dbReference type="GO" id="GO:0140991">
    <property type="term" value="P:piRNA-mediated gene silencing by mRNA destabilization"/>
    <property type="evidence" value="ECO:0000315"/>
    <property type="project" value="FlyBase"/>
</dbReference>
<dbReference type="GO" id="GO:0007315">
    <property type="term" value="P:pole plasm assembly"/>
    <property type="evidence" value="ECO:0000316"/>
    <property type="project" value="FlyBase"/>
</dbReference>
<dbReference type="GO" id="GO:0060213">
    <property type="term" value="P:positive regulation of nuclear-transcribed mRNA poly(A) tail shortening"/>
    <property type="evidence" value="ECO:0000315"/>
    <property type="project" value="FlyBase"/>
</dbReference>
<dbReference type="GO" id="GO:0006355">
    <property type="term" value="P:regulation of DNA-templated transcription"/>
    <property type="evidence" value="ECO:0007669"/>
    <property type="project" value="InterPro"/>
</dbReference>
<dbReference type="GO" id="GO:0043488">
    <property type="term" value="P:regulation of mRNA stability"/>
    <property type="evidence" value="ECO:0000315"/>
    <property type="project" value="FlyBase"/>
</dbReference>
<dbReference type="CDD" id="cd09557">
    <property type="entry name" value="SAM_Smaug"/>
    <property type="match status" value="1"/>
</dbReference>
<dbReference type="FunFam" id="1.10.150.50:FF:000076">
    <property type="entry name" value="Smg, isoform B"/>
    <property type="match status" value="1"/>
</dbReference>
<dbReference type="FunFam" id="1.25.40.170:FF:000005">
    <property type="entry name" value="Smg, isoform B"/>
    <property type="match status" value="1"/>
</dbReference>
<dbReference type="Gene3D" id="1.25.40.170">
    <property type="entry name" value="Smaug, PHAT domain"/>
    <property type="match status" value="1"/>
</dbReference>
<dbReference type="Gene3D" id="1.10.150.50">
    <property type="entry name" value="Transcription Factor, Ets-1"/>
    <property type="match status" value="1"/>
</dbReference>
<dbReference type="InterPro" id="IPR016024">
    <property type="entry name" value="ARM-type_fold"/>
</dbReference>
<dbReference type="InterPro" id="IPR015327">
    <property type="entry name" value="PHAT_dom"/>
</dbReference>
<dbReference type="InterPro" id="IPR037093">
    <property type="entry name" value="PHAT_dom_sf"/>
</dbReference>
<dbReference type="InterPro" id="IPR001660">
    <property type="entry name" value="SAM"/>
</dbReference>
<dbReference type="InterPro" id="IPR013761">
    <property type="entry name" value="SAM/pointed_sf"/>
</dbReference>
<dbReference type="InterPro" id="IPR050897">
    <property type="entry name" value="SMAUG/VTS1_RNA-bind"/>
</dbReference>
<dbReference type="InterPro" id="IPR037634">
    <property type="entry name" value="Smaug_SAM"/>
</dbReference>
<dbReference type="PANTHER" id="PTHR12515:SF5">
    <property type="entry name" value="PROTEIN SMAUG"/>
    <property type="match status" value="1"/>
</dbReference>
<dbReference type="PANTHER" id="PTHR12515">
    <property type="entry name" value="STERILE ALPHA MOTIF DOMAIN CONTAINING PROTEIN 4-RELATED"/>
    <property type="match status" value="1"/>
</dbReference>
<dbReference type="Pfam" id="PF09246">
    <property type="entry name" value="PHAT"/>
    <property type="match status" value="1"/>
</dbReference>
<dbReference type="Pfam" id="PF00536">
    <property type="entry name" value="SAM_1"/>
    <property type="match status" value="1"/>
</dbReference>
<dbReference type="SMART" id="SM00454">
    <property type="entry name" value="SAM"/>
    <property type="match status" value="1"/>
</dbReference>
<dbReference type="SUPFAM" id="SSF48371">
    <property type="entry name" value="ARM repeat"/>
    <property type="match status" value="1"/>
</dbReference>
<dbReference type="SUPFAM" id="SSF47769">
    <property type="entry name" value="SAM/Pointed domain"/>
    <property type="match status" value="1"/>
</dbReference>
<reference key="1">
    <citation type="journal article" date="1999" name="Mol. Cell">
        <title>Smaug, a novel RNA-binding protein that operates a translational switch in Drosophila.</title>
        <authorList>
            <person name="Dahanukar A."/>
            <person name="Walker J.A."/>
            <person name="Wharton R.P."/>
        </authorList>
    </citation>
    <scope>NUCLEOTIDE SEQUENCE [MRNA] (ISOFORM A)</scope>
    <scope>FUNCTION</scope>
    <scope>SUBCELLULAR LOCATION</scope>
    <scope>RNA-BINDING</scope>
    <scope>TISSUE SPECIFICITY</scope>
    <scope>DEVELOPMENTAL STAGE</scope>
    <scope>INTERACTION WITH OSK</scope>
    <source>
        <strain>Iso-1</strain>
    </source>
</reference>
<reference key="2">
    <citation type="journal article" date="1999" name="RNA">
        <title>Smaug, a novel and conserved protein, contributes to repression of nanos mRNA translation in vitro.</title>
        <authorList>
            <person name="Smibert C.A."/>
            <person name="Lie Y.S."/>
            <person name="Shillinglaw W."/>
            <person name="Henzel W.J."/>
            <person name="Macdonald P.M."/>
        </authorList>
    </citation>
    <scope>NUCLEOTIDE SEQUENCE [MRNA] (ISOFORM A)</scope>
    <scope>PROTEIN SEQUENCE OF 95-102; 272-287; 461-469; 570-580; 740-754; 776-788; 935-953; 966-977 AND 980-991</scope>
    <scope>FUNCTION</scope>
    <scope>RNA-BINDING</scope>
    <scope>TISSUE SPECIFICITY</scope>
    <source>
        <tissue>Embryo</tissue>
    </source>
</reference>
<reference key="3">
    <citation type="journal article" date="2000" name="Science">
        <title>The genome sequence of Drosophila melanogaster.</title>
        <authorList>
            <person name="Adams M.D."/>
            <person name="Celniker S.E."/>
            <person name="Holt R.A."/>
            <person name="Evans C.A."/>
            <person name="Gocayne J.D."/>
            <person name="Amanatides P.G."/>
            <person name="Scherer S.E."/>
            <person name="Li P.W."/>
            <person name="Hoskins R.A."/>
            <person name="Galle R.F."/>
            <person name="George R.A."/>
            <person name="Lewis S.E."/>
            <person name="Richards S."/>
            <person name="Ashburner M."/>
            <person name="Henderson S.N."/>
            <person name="Sutton G.G."/>
            <person name="Wortman J.R."/>
            <person name="Yandell M.D."/>
            <person name="Zhang Q."/>
            <person name="Chen L.X."/>
            <person name="Brandon R.C."/>
            <person name="Rogers Y.-H.C."/>
            <person name="Blazej R.G."/>
            <person name="Champe M."/>
            <person name="Pfeiffer B.D."/>
            <person name="Wan K.H."/>
            <person name="Doyle C."/>
            <person name="Baxter E.G."/>
            <person name="Helt G."/>
            <person name="Nelson C.R."/>
            <person name="Miklos G.L.G."/>
            <person name="Abril J.F."/>
            <person name="Agbayani A."/>
            <person name="An H.-J."/>
            <person name="Andrews-Pfannkoch C."/>
            <person name="Baldwin D."/>
            <person name="Ballew R.M."/>
            <person name="Basu A."/>
            <person name="Baxendale J."/>
            <person name="Bayraktaroglu L."/>
            <person name="Beasley E.M."/>
            <person name="Beeson K.Y."/>
            <person name="Benos P.V."/>
            <person name="Berman B.P."/>
            <person name="Bhandari D."/>
            <person name="Bolshakov S."/>
            <person name="Borkova D."/>
            <person name="Botchan M.R."/>
            <person name="Bouck J."/>
            <person name="Brokstein P."/>
            <person name="Brottier P."/>
            <person name="Burtis K.C."/>
            <person name="Busam D.A."/>
            <person name="Butler H."/>
            <person name="Cadieu E."/>
            <person name="Center A."/>
            <person name="Chandra I."/>
            <person name="Cherry J.M."/>
            <person name="Cawley S."/>
            <person name="Dahlke C."/>
            <person name="Davenport L.B."/>
            <person name="Davies P."/>
            <person name="de Pablos B."/>
            <person name="Delcher A."/>
            <person name="Deng Z."/>
            <person name="Mays A.D."/>
            <person name="Dew I."/>
            <person name="Dietz S.M."/>
            <person name="Dodson K."/>
            <person name="Doup L.E."/>
            <person name="Downes M."/>
            <person name="Dugan-Rocha S."/>
            <person name="Dunkov B.C."/>
            <person name="Dunn P."/>
            <person name="Durbin K.J."/>
            <person name="Evangelista C.C."/>
            <person name="Ferraz C."/>
            <person name="Ferriera S."/>
            <person name="Fleischmann W."/>
            <person name="Fosler C."/>
            <person name="Gabrielian A.E."/>
            <person name="Garg N.S."/>
            <person name="Gelbart W.M."/>
            <person name="Glasser K."/>
            <person name="Glodek A."/>
            <person name="Gong F."/>
            <person name="Gorrell J.H."/>
            <person name="Gu Z."/>
            <person name="Guan P."/>
            <person name="Harris M."/>
            <person name="Harris N.L."/>
            <person name="Harvey D.A."/>
            <person name="Heiman T.J."/>
            <person name="Hernandez J.R."/>
            <person name="Houck J."/>
            <person name="Hostin D."/>
            <person name="Houston K.A."/>
            <person name="Howland T.J."/>
            <person name="Wei M.-H."/>
            <person name="Ibegwam C."/>
            <person name="Jalali M."/>
            <person name="Kalush F."/>
            <person name="Karpen G.H."/>
            <person name="Ke Z."/>
            <person name="Kennison J.A."/>
            <person name="Ketchum K.A."/>
            <person name="Kimmel B.E."/>
            <person name="Kodira C.D."/>
            <person name="Kraft C.L."/>
            <person name="Kravitz S."/>
            <person name="Kulp D."/>
            <person name="Lai Z."/>
            <person name="Lasko P."/>
            <person name="Lei Y."/>
            <person name="Levitsky A.A."/>
            <person name="Li J.H."/>
            <person name="Li Z."/>
            <person name="Liang Y."/>
            <person name="Lin X."/>
            <person name="Liu X."/>
            <person name="Mattei B."/>
            <person name="McIntosh T.C."/>
            <person name="McLeod M.P."/>
            <person name="McPherson D."/>
            <person name="Merkulov G."/>
            <person name="Milshina N.V."/>
            <person name="Mobarry C."/>
            <person name="Morris J."/>
            <person name="Moshrefi A."/>
            <person name="Mount S.M."/>
            <person name="Moy M."/>
            <person name="Murphy B."/>
            <person name="Murphy L."/>
            <person name="Muzny D.M."/>
            <person name="Nelson D.L."/>
            <person name="Nelson D.R."/>
            <person name="Nelson K.A."/>
            <person name="Nixon K."/>
            <person name="Nusskern D.R."/>
            <person name="Pacleb J.M."/>
            <person name="Palazzolo M."/>
            <person name="Pittman G.S."/>
            <person name="Pan S."/>
            <person name="Pollard J."/>
            <person name="Puri V."/>
            <person name="Reese M.G."/>
            <person name="Reinert K."/>
            <person name="Remington K."/>
            <person name="Saunders R.D.C."/>
            <person name="Scheeler F."/>
            <person name="Shen H."/>
            <person name="Shue B.C."/>
            <person name="Siden-Kiamos I."/>
            <person name="Simpson M."/>
            <person name="Skupski M.P."/>
            <person name="Smith T.J."/>
            <person name="Spier E."/>
            <person name="Spradling A.C."/>
            <person name="Stapleton M."/>
            <person name="Strong R."/>
            <person name="Sun E."/>
            <person name="Svirskas R."/>
            <person name="Tector C."/>
            <person name="Turner R."/>
            <person name="Venter E."/>
            <person name="Wang A.H."/>
            <person name="Wang X."/>
            <person name="Wang Z.-Y."/>
            <person name="Wassarman D.A."/>
            <person name="Weinstock G.M."/>
            <person name="Weissenbach J."/>
            <person name="Williams S.M."/>
            <person name="Woodage T."/>
            <person name="Worley K.C."/>
            <person name="Wu D."/>
            <person name="Yang S."/>
            <person name="Yao Q.A."/>
            <person name="Ye J."/>
            <person name="Yeh R.-F."/>
            <person name="Zaveri J.S."/>
            <person name="Zhan M."/>
            <person name="Zhang G."/>
            <person name="Zhao Q."/>
            <person name="Zheng L."/>
            <person name="Zheng X.H."/>
            <person name="Zhong F.N."/>
            <person name="Zhong W."/>
            <person name="Zhou X."/>
            <person name="Zhu S.C."/>
            <person name="Zhu X."/>
            <person name="Smith H.O."/>
            <person name="Gibbs R.A."/>
            <person name="Myers E.W."/>
            <person name="Rubin G.M."/>
            <person name="Venter J.C."/>
        </authorList>
    </citation>
    <scope>NUCLEOTIDE SEQUENCE [LARGE SCALE GENOMIC DNA]</scope>
    <source>
        <strain>Berkeley</strain>
    </source>
</reference>
<reference key="4">
    <citation type="journal article" date="2002" name="Genome Biol.">
        <title>Annotation of the Drosophila melanogaster euchromatic genome: a systematic review.</title>
        <authorList>
            <person name="Misra S."/>
            <person name="Crosby M.A."/>
            <person name="Mungall C.J."/>
            <person name="Matthews B.B."/>
            <person name="Campbell K.S."/>
            <person name="Hradecky P."/>
            <person name="Huang Y."/>
            <person name="Kaminker J.S."/>
            <person name="Millburn G.H."/>
            <person name="Prochnik S.E."/>
            <person name="Smith C.D."/>
            <person name="Tupy J.L."/>
            <person name="Whitfield E.J."/>
            <person name="Bayraktaroglu L."/>
            <person name="Berman B.P."/>
            <person name="Bettencourt B.R."/>
            <person name="Celniker S.E."/>
            <person name="de Grey A.D.N.J."/>
            <person name="Drysdale R.A."/>
            <person name="Harris N.L."/>
            <person name="Richter J."/>
            <person name="Russo S."/>
            <person name="Schroeder A.J."/>
            <person name="Shu S.Q."/>
            <person name="Stapleton M."/>
            <person name="Yamada C."/>
            <person name="Ashburner M."/>
            <person name="Gelbart W.M."/>
            <person name="Rubin G.M."/>
            <person name="Lewis S.E."/>
        </authorList>
    </citation>
    <scope>GENOME REANNOTATION</scope>
    <scope>ALTERNATIVE SPLICING</scope>
    <source>
        <strain>Berkeley</strain>
    </source>
</reference>
<reference key="5">
    <citation type="journal article" date="2002" name="Genome Biol.">
        <title>A Drosophila full-length cDNA resource.</title>
        <authorList>
            <person name="Stapleton M."/>
            <person name="Carlson J.W."/>
            <person name="Brokstein P."/>
            <person name="Yu C."/>
            <person name="Champe M."/>
            <person name="George R.A."/>
            <person name="Guarin H."/>
            <person name="Kronmiller B."/>
            <person name="Pacleb J.M."/>
            <person name="Park S."/>
            <person name="Wan K.H."/>
            <person name="Rubin G.M."/>
            <person name="Celniker S.E."/>
        </authorList>
    </citation>
    <scope>NUCLEOTIDE SEQUENCE [LARGE SCALE MRNA] (ISOFORM A)</scope>
    <source>
        <strain>Berkeley</strain>
        <tissue>Embryo</tissue>
    </source>
</reference>
<reference key="6">
    <citation type="submission" date="1993-11" db="EMBL/GenBank/DDBJ databases">
        <authorList>
            <person name="Edgar B."/>
        </authorList>
    </citation>
    <scope>NUCLEOTIDE SEQUENCE OF 573-792 (ISOFORMS A/D)</scope>
    <source>
        <strain>Sevelin</strain>
        <tissue>Embryo</tissue>
    </source>
</reference>
<reference key="7">
    <citation type="journal article" date="1996" name="Genes Dev.">
        <title>smaug protein represses translation of unlocalized nanos mRNA in the Drosophila embryo.</title>
        <authorList>
            <person name="Smibert C.A."/>
            <person name="Wilson J.E."/>
            <person name="Kerr K."/>
            <person name="Macdonald P.M."/>
        </authorList>
    </citation>
    <scope>FUNCTION</scope>
</reference>
<reference key="8">
    <citation type="journal article" date="2000" name="Mol. Cell">
        <title>Overlapping but distinct RNA elements control repression and activation of nanos translation.</title>
        <authorList>
            <person name="Crucs S."/>
            <person name="Chatterjee S."/>
            <person name="Gavis E.R."/>
        </authorList>
    </citation>
    <scope>RNA-BINDING</scope>
</reference>
<reference key="9">
    <citation type="journal article" date="2003" name="Nat. Struct. Biol.">
        <title>The RNA-binding SAM domain of Smaug defines a new family of post-transcriptional regulators.</title>
        <authorList>
            <person name="Aviv T."/>
            <person name="Lin Z."/>
            <person name="Lau S."/>
            <person name="Rendl L.M."/>
            <person name="Sicheri F."/>
            <person name="Smibert C.A."/>
        </authorList>
    </citation>
    <scope>MUTAGENESIS OF LYS-606; ARG-609; HIS-611; LYS-612; TYR-613 AND ALA-642</scope>
</reference>
<reference key="10">
    <citation type="journal article" date="2004" name="EMBO J.">
        <title>Drosophila Cup is an eIF4E-binding protein that functions in Smaug-mediated translational repression.</title>
        <authorList>
            <person name="Nelson M.R."/>
            <person name="Leidal A.M."/>
            <person name="Smibert C.A."/>
        </authorList>
    </citation>
    <scope>FUNCTION</scope>
    <scope>INTERACTION WITH CUP</scope>
</reference>
<reference key="11">
    <citation type="journal article" date="2008" name="J. Proteome Res.">
        <title>Phosphoproteome analysis of Drosophila melanogaster embryos.</title>
        <authorList>
            <person name="Zhai B."/>
            <person name="Villen J."/>
            <person name="Beausoleil S.A."/>
            <person name="Mintseris J."/>
            <person name="Gygi S.P."/>
        </authorList>
    </citation>
    <scope>PHOSPHORYLATION [LARGE SCALE ANALYSIS] AT SER-564; SER-575 AND SER-972</scope>
    <scope>IDENTIFICATION BY MASS SPECTROMETRY</scope>
    <source>
        <tissue>Embryo</tissue>
    </source>
</reference>
<reference key="12">
    <citation type="journal article" date="2010" name="Nature">
        <title>Maternal mRNA deadenylation and decay by the piRNA pathway in the early Drosophila embryo.</title>
        <authorList>
            <person name="Rouget C."/>
            <person name="Papin C."/>
            <person name="Boureux A."/>
            <person name="Meunier A.C."/>
            <person name="Franco B."/>
            <person name="Robine N."/>
            <person name="Lai E.C."/>
            <person name="Pelisson A."/>
            <person name="Simonelig M."/>
        </authorList>
    </citation>
    <scope>INTERACTION WITH AUB</scope>
    <scope>TWIN AND AGO3</scope>
    <scope>SUBCELLULAR LOCATION</scope>
    <scope>TISSUE SPECIFICITY</scope>
</reference>
<reference key="13">
    <citation type="journal article" date="2003" name="Mol. Cell">
        <title>RNA recognition via the SAM domain of Smaug.</title>
        <authorList>
            <person name="Green J.B."/>
            <person name="Gardner C.D."/>
            <person name="Wharton R.P."/>
            <person name="Aggarwal A.K."/>
        </authorList>
    </citation>
    <scope>X-RAY CRYSTALLOGRAPHY (1.8 ANGSTROMS) OF 596-764</scope>
    <scope>MUTAGENESIS OF PHE-632; GLN-634; LYS-640; ASN-658; GLN-665; VAL-724; ARG-739 AND HIS-749</scope>
</reference>
<evidence type="ECO:0000256" key="1">
    <source>
        <dbReference type="SAM" id="MobiDB-lite"/>
    </source>
</evidence>
<evidence type="ECO:0000269" key="2">
    <source>
    </source>
</evidence>
<evidence type="ECO:0000269" key="3">
    <source>
    </source>
</evidence>
<evidence type="ECO:0000269" key="4">
    <source>
    </source>
</evidence>
<evidence type="ECO:0000269" key="5">
    <source>
    </source>
</evidence>
<evidence type="ECO:0000269" key="6">
    <source>
    </source>
</evidence>
<evidence type="ECO:0000269" key="7">
    <source>
    </source>
</evidence>
<evidence type="ECO:0000269" key="8">
    <source>
    </source>
</evidence>
<evidence type="ECO:0000269" key="9">
    <source>
    </source>
</evidence>
<evidence type="ECO:0000305" key="10"/>
<evidence type="ECO:0007829" key="11">
    <source>
        <dbReference type="PDB" id="1OXJ"/>
    </source>
</evidence>
<evidence type="ECO:0007829" key="12">
    <source>
        <dbReference type="PDB" id="8OIJ"/>
    </source>
</evidence>
<name>SMG_DROME</name>
<gene>
    <name type="primary">smg</name>
    <name type="ORF">CG5263</name>
</gene>
<keyword id="KW-0002">3D-structure</keyword>
<keyword id="KW-0025">Alternative splicing</keyword>
<keyword id="KW-0963">Cytoplasm</keyword>
<keyword id="KW-0217">Developmental protein</keyword>
<keyword id="KW-0903">Direct protein sequencing</keyword>
<keyword id="KW-0597">Phosphoprotein</keyword>
<keyword id="KW-1185">Reference proteome</keyword>
<keyword id="KW-0678">Repressor</keyword>
<keyword id="KW-0694">RNA-binding</keyword>
<keyword id="KW-0810">Translation regulation</keyword>
<comment type="function">
    <text evidence="2 3 6 9">Translation regulator that binds to the 3'-UTR of specific mRNAs such as nanos (nos) and prevents their translation. Prevents translation of unlocalized nanos in the bulk cytoplasm via the recruitment of cup.</text>
</comment>
<comment type="subunit">
    <text evidence="2 6 8">Interacts with oskar (osk). Binds to the 3'-UTR of nanos (nos). Interacts with cup, which in turn recruits eIF4-E, leading to an indirect interaction between smg and eIF4-E that prevents mRNA translation. Forms a complex with aub, twin, AGO3, nanos mRNA and piRNAs that targets the nanos 3'-untranslated region, in early embryos.</text>
</comment>
<comment type="interaction">
    <interactant intactId="EBI-108638">
        <id>Q23972</id>
    </interactant>
    <interactant intactId="EBI-95398">
        <id>Q9VMA3</id>
        <label>cup</label>
    </interactant>
    <organismsDiffer>false</organismsDiffer>
    <experiments>4</experiments>
</comment>
<comment type="subcellular location">
    <subcellularLocation>
        <location evidence="2 8">Cytoplasm</location>
    </subcellularLocation>
    <text>In the cytoplasm of syncytial embryos, accumulates in discrete foci.</text>
</comment>
<comment type="alternative products">
    <event type="alternative splicing"/>
    <isoform>
        <id>Q23972-1</id>
        <name>A</name>
        <name>B</name>
        <name>C</name>
        <name>E</name>
        <sequence type="displayed"/>
    </isoform>
    <isoform>
        <id>Q23972-2</id>
        <name>D</name>
        <sequence type="described" ref="VSP_039395"/>
    </isoform>
</comment>
<comment type="tissue specificity">
    <text evidence="2 3 8">At syncytial blastoderm, it is located throughout the bulk cytoplasm and pole plasm. By the time of cellularization, it concentrates at the posterior pole.</text>
</comment>
<comment type="developmental stage">
    <text evidence="2">Expressed maternally. The protein accumulates during the first 3 hours after fertilization, and then decreases rapidly.</text>
</comment>
<comment type="domain">
    <text>The SAM domain mediates the association with the 3'-UTR of specific mRNAs.</text>
</comment>
<comment type="similarity">
    <text evidence="10">Belongs to the SMAUG family.</text>
</comment>
<comment type="sequence caution" evidence="10">
    <conflict type="miscellaneous discrepancy">
        <sequence resource="EMBL-CDS" id="AAA03462"/>
    </conflict>
    <text>Absence of a large region from Gly-793 to the end of the coding region that changes the frame.</text>
</comment>
<proteinExistence type="evidence at protein level"/>
<sequence length="999" mass="109065">MKYATGTDNAMTSGISGQTNNSNSASNEMQPTTSTPTAAHKEATSTATTTATYANGNPNSNANPSQSQPSNALFCEQVTTVTNLFEKWNDCERTVVMYALLKRLRYPSLKFLQYSIDSNLTQNLGTSQTNLSSVVIDINANNPVYLQNLLNAYKTFQPCDLLDAMSSSSSDKDSMPCYGSDFQITTSAQCDERKLYARKEDILHEVLNMLPLLKPGNEEAKLIYLTLIPVAVKDTMQQIVPTELVQQIFSYLLIHPAITSEDRRSLNIWLRHLEDHIQAAAAGLTNRSYFLQPSPQLVAGGSSTGSGSCSSSATSSSTASCSSVASSSLCPASGSRSSRTNDWQTIAPPSKQLQNKLAGDWRGNGGGSSSGSINPLCDNLNGITLNELASSQNSLGLSLEGSSSLVNGVVAGAGSMLGIAGGDDHDTSFSKNGTEILDFDPVTADMGEACSLASSSLCGRNGGNPVEDRSQPPPNLQQQLLQPPPYASILMGNVGDQFGEINRWSLDSKIAALKTRRSNSLTTQTISSCSSSSNSSVITVNDNCSNSTENLAQFANKPRSFSLSIEHQRGALMNSGSDTRLDEFKPNYIKFHTRNVGMSGIGLWLKSLRLHKYIELFKNMTYEEMLLITEDFLQSVGVTKGASHKLALCIDKLKERANILNRVEQELLSGQMELSTAVEELTNIVLTPMKPLESPGPPEENIGLRFLKVIDIVTNTLQQDPYAVQDDETLGVLMWILDRSIHNEAFMNHASQLKDLKFKLSKMKISMVPKMHHVKPAGVGPNNGNINKPRWNGKTRKCDTKNGSNDRINNRKNSNDMLNFSLNCLPHPLPHHSQQAPPPLPQFDYNGYGGGPSHQPQYKSSSYPSFMGNPQQQPPPPPSSKSHHHPQQMQQMLQQHNHFPALPQQTPPQSHRRSLNNLILVAGGPQQPQQLIFKPGQGVLTNNGSNDNLVLERNQQSQQQQQQRKLSGGVSSAEQQPKKTMAAVVMENLAKFDQHFTLF</sequence>
<protein>
    <recommendedName>
        <fullName>Protein Smaug</fullName>
    </recommendedName>
</protein>
<organism>
    <name type="scientific">Drosophila melanogaster</name>
    <name type="common">Fruit fly</name>
    <dbReference type="NCBI Taxonomy" id="7227"/>
    <lineage>
        <taxon>Eukaryota</taxon>
        <taxon>Metazoa</taxon>
        <taxon>Ecdysozoa</taxon>
        <taxon>Arthropoda</taxon>
        <taxon>Hexapoda</taxon>
        <taxon>Insecta</taxon>
        <taxon>Pterygota</taxon>
        <taxon>Neoptera</taxon>
        <taxon>Endopterygota</taxon>
        <taxon>Diptera</taxon>
        <taxon>Brachycera</taxon>
        <taxon>Muscomorpha</taxon>
        <taxon>Ephydroidea</taxon>
        <taxon>Drosophilidae</taxon>
        <taxon>Drosophila</taxon>
        <taxon>Sophophora</taxon>
    </lineage>
</organism>
<accession>Q23972</accession>
<accession>A4V1P7</accession>
<accession>B7Z0F4</accession>
<accession>B7Z0F5</accession>
<accession>Q9V3T0</accession>
<accession>Q9VSS8</accession>
<feature type="chain" id="PRO_0000071972" description="Protein Smaug">
    <location>
        <begin position="1"/>
        <end position="999"/>
    </location>
</feature>
<feature type="domain" description="SAM">
    <location>
        <begin position="600"/>
        <end position="654"/>
    </location>
</feature>
<feature type="region of interest" description="Disordered" evidence="1">
    <location>
        <begin position="1"/>
        <end position="69"/>
    </location>
</feature>
<feature type="region of interest" description="Disordered" evidence="1">
    <location>
        <begin position="329"/>
        <end position="349"/>
    </location>
</feature>
<feature type="region of interest" description="Interaction with cup">
    <location>
        <begin position="583"/>
        <end position="763"/>
    </location>
</feature>
<feature type="region of interest" description="Disordered" evidence="1">
    <location>
        <begin position="773"/>
        <end position="892"/>
    </location>
</feature>
<feature type="region of interest" description="Disordered" evidence="1">
    <location>
        <begin position="955"/>
        <end position="977"/>
    </location>
</feature>
<feature type="compositionally biased region" description="Polar residues" evidence="1">
    <location>
        <begin position="1"/>
        <end position="36"/>
    </location>
</feature>
<feature type="compositionally biased region" description="Low complexity" evidence="1">
    <location>
        <begin position="44"/>
        <end position="69"/>
    </location>
</feature>
<feature type="compositionally biased region" description="Low complexity" evidence="1">
    <location>
        <begin position="329"/>
        <end position="338"/>
    </location>
</feature>
<feature type="compositionally biased region" description="Polar residues" evidence="1">
    <location>
        <begin position="801"/>
        <end position="822"/>
    </location>
</feature>
<feature type="compositionally biased region" description="Polar residues" evidence="1">
    <location>
        <begin position="854"/>
        <end position="864"/>
    </location>
</feature>
<feature type="modified residue" description="Phosphoserine" evidence="7">
    <location>
        <position position="564"/>
    </location>
</feature>
<feature type="modified residue" description="Phosphoserine" evidence="7">
    <location>
        <position position="575"/>
    </location>
</feature>
<feature type="modified residue" description="Phosphoserine" evidence="7">
    <location>
        <position position="972"/>
    </location>
</feature>
<feature type="splice variant" id="VSP_039395" description="In isoform D." evidence="10">
    <original>ENLAKFDQHFTLF</original>
    <variation>VSNPNQNQDQHDQPQILINNNNNNSMLNNNLINQQQLQLLAAAAAAVGSGSCLCSNGGGGACVHNICHQSSKNNNHGVDHCLSQSPLGSLGMSPHVTEYKMNDFKSLEQLETLCRQMTEQAMN</variation>
    <location>
        <begin position="987"/>
        <end position="999"/>
    </location>
</feature>
<feature type="mutagenesis site" description="Reduced RNA-binding. Complete loss; when associated with R-609." evidence="5">
    <original>K</original>
    <variation>A</variation>
    <location>
        <position position="606"/>
    </location>
</feature>
<feature type="mutagenesis site" description="Reduced RNA-binding. Complete loss; when associated with A-606." evidence="5">
    <original>R</original>
    <variation>A</variation>
    <location>
        <position position="609"/>
    </location>
</feature>
<feature type="mutagenesis site" description="Reduced RNA-binding." evidence="5">
    <original>H</original>
    <variation>S</variation>
    <variation>Q</variation>
    <location>
        <position position="611"/>
    </location>
</feature>
<feature type="mutagenesis site" description="Loss of RNA-binding." evidence="5">
    <original>K</original>
    <variation>Q</variation>
    <location>
        <position position="612"/>
    </location>
</feature>
<feature type="mutagenesis site" description="Reduced RNA-binding." evidence="5">
    <original>Y</original>
    <variation>F</variation>
    <location>
        <position position="613"/>
    </location>
</feature>
<feature type="mutagenesis site" description="No effect on RNA-binding; when associated with L-634." evidence="4">
    <original>F</original>
    <variation>L</variation>
    <location>
        <position position="632"/>
    </location>
</feature>
<feature type="mutagenesis site" description="No effect on RNA-binding; when associated with L-632." evidence="4">
    <original>Q</original>
    <variation>L</variation>
    <location>
        <position position="634"/>
    </location>
</feature>
<feature type="mutagenesis site" description="Reduced RNA-binding." evidence="4">
    <original>K</original>
    <variation>S</variation>
    <location>
        <position position="640"/>
    </location>
</feature>
<feature type="mutagenesis site" description="Loss of RNA-binding." evidence="5">
    <original>A</original>
    <variation>H</variation>
    <variation>Q</variation>
    <location>
        <position position="642"/>
    </location>
</feature>
<feature type="mutagenesis site" description="No effect on RNA-binding; when associated with R-665; I-724 and R-749." evidence="4">
    <original>N</original>
    <variation>D</variation>
    <location>
        <position position="658"/>
    </location>
</feature>
<feature type="mutagenesis site" description="No effect on RNA-binding; when associated with D-658; I-724 and R-749." evidence="4">
    <original>Q</original>
    <variation>R</variation>
    <location>
        <position position="665"/>
    </location>
</feature>
<feature type="mutagenesis site" description="No effect on RNA-binding; when associated with D-658; R-665 and R-749." evidence="4">
    <original>V</original>
    <variation>I</variation>
    <location>
        <position position="724"/>
    </location>
</feature>
<feature type="mutagenesis site" description="No effect on RNA-binding." evidence="4">
    <original>R</original>
    <variation>S</variation>
    <location>
        <position position="739"/>
    </location>
</feature>
<feature type="mutagenesis site" description="No effect on RNA-binding; when associated with D-658; I-724 and R-665." evidence="4">
    <original>H</original>
    <variation>R</variation>
    <location>
        <position position="749"/>
    </location>
</feature>
<feature type="helix" evidence="12">
    <location>
        <begin position="74"/>
        <end position="85"/>
    </location>
</feature>
<feature type="helix" evidence="12">
    <location>
        <begin position="90"/>
        <end position="101"/>
    </location>
</feature>
<feature type="helix" evidence="12">
    <location>
        <begin position="106"/>
        <end position="123"/>
    </location>
</feature>
<feature type="turn" evidence="12">
    <location>
        <begin position="127"/>
        <end position="129"/>
    </location>
</feature>
<feature type="helix" evidence="12">
    <location>
        <begin position="130"/>
        <end position="141"/>
    </location>
</feature>
<feature type="helix" evidence="12">
    <location>
        <begin position="143"/>
        <end position="155"/>
    </location>
</feature>
<feature type="helix" evidence="12">
    <location>
        <begin position="199"/>
        <end position="209"/>
    </location>
</feature>
<feature type="helix" evidence="12">
    <location>
        <begin position="210"/>
        <end position="212"/>
    </location>
</feature>
<feature type="helix" evidence="12">
    <location>
        <begin position="218"/>
        <end position="235"/>
    </location>
</feature>
<feature type="turn" evidence="12">
    <location>
        <begin position="236"/>
        <end position="238"/>
    </location>
</feature>
<feature type="helix" evidence="12">
    <location>
        <begin position="242"/>
        <end position="254"/>
    </location>
</feature>
<feature type="helix" evidence="12">
    <location>
        <begin position="260"/>
        <end position="270"/>
    </location>
</feature>
<feature type="helix" evidence="12">
    <location>
        <begin position="271"/>
        <end position="273"/>
    </location>
</feature>
<feature type="helix" evidence="11">
    <location>
        <begin position="601"/>
        <end position="607"/>
    </location>
</feature>
<feature type="helix" evidence="11">
    <location>
        <begin position="611"/>
        <end position="617"/>
    </location>
</feature>
<feature type="helix" evidence="11">
    <location>
        <begin position="622"/>
        <end position="625"/>
    </location>
</feature>
<feature type="helix" evidence="11">
    <location>
        <begin position="630"/>
        <end position="635"/>
    </location>
</feature>
<feature type="helix" evidence="11">
    <location>
        <begin position="640"/>
        <end position="668"/>
    </location>
</feature>
<feature type="helix" evidence="11">
    <location>
        <begin position="674"/>
        <end position="682"/>
    </location>
</feature>
<feature type="turn" evidence="11">
    <location>
        <begin position="683"/>
        <end position="686"/>
    </location>
</feature>
<feature type="helix" evidence="11">
    <location>
        <begin position="698"/>
        <end position="700"/>
    </location>
</feature>
<feature type="helix" evidence="11">
    <location>
        <begin position="702"/>
        <end position="718"/>
    </location>
</feature>
<feature type="helix" evidence="11">
    <location>
        <begin position="723"/>
        <end position="725"/>
    </location>
</feature>
<feature type="helix" evidence="11">
    <location>
        <begin position="727"/>
        <end position="741"/>
    </location>
</feature>
<feature type="helix" evidence="11">
    <location>
        <begin position="744"/>
        <end position="749"/>
    </location>
</feature>
<feature type="helix" evidence="11">
    <location>
        <begin position="750"/>
        <end position="761"/>
    </location>
</feature>